<dbReference type="EC" id="2.7.13.3"/>
<dbReference type="EMBL" id="CU329670">
    <property type="protein sequence ID" value="CAB11683.1"/>
    <property type="molecule type" value="Genomic_DNA"/>
</dbReference>
<dbReference type="PIR" id="T38457">
    <property type="entry name" value="T38457"/>
</dbReference>
<dbReference type="RefSeq" id="NP_594410.1">
    <property type="nucleotide sequence ID" value="NM_001019841.2"/>
</dbReference>
<dbReference type="SMR" id="O14002"/>
<dbReference type="BioGRID" id="278522">
    <property type="interactions" value="4"/>
</dbReference>
<dbReference type="STRING" id="284812.O14002"/>
<dbReference type="iPTMnet" id="O14002"/>
<dbReference type="PaxDb" id="4896-SPAC27E2.09.1"/>
<dbReference type="EnsemblFungi" id="SPAC27E2.09.1">
    <property type="protein sequence ID" value="SPAC27E2.09.1:pep"/>
    <property type="gene ID" value="SPAC27E2.09"/>
</dbReference>
<dbReference type="GeneID" id="2542041"/>
<dbReference type="KEGG" id="spo:2542041"/>
<dbReference type="PomBase" id="SPAC27E2.09">
    <property type="gene designation" value="mak2"/>
</dbReference>
<dbReference type="VEuPathDB" id="FungiDB:SPAC27E2.09"/>
<dbReference type="eggNOG" id="KOG0519">
    <property type="taxonomic scope" value="Eukaryota"/>
</dbReference>
<dbReference type="HOGENOM" id="CLU_000400_0_0_1"/>
<dbReference type="InParanoid" id="O14002"/>
<dbReference type="OMA" id="HAHLARK"/>
<dbReference type="PhylomeDB" id="O14002"/>
<dbReference type="PRO" id="PR:O14002"/>
<dbReference type="Proteomes" id="UP000002485">
    <property type="component" value="Chromosome I"/>
</dbReference>
<dbReference type="GO" id="GO:0005737">
    <property type="term" value="C:cytoplasm"/>
    <property type="evidence" value="ECO:0000314"/>
    <property type="project" value="PomBase"/>
</dbReference>
<dbReference type="GO" id="GO:0009365">
    <property type="term" value="C:protein histidine kinase complex"/>
    <property type="evidence" value="ECO:0000314"/>
    <property type="project" value="PomBase"/>
</dbReference>
<dbReference type="GO" id="GO:0005524">
    <property type="term" value="F:ATP binding"/>
    <property type="evidence" value="ECO:0007669"/>
    <property type="project" value="UniProtKB-KW"/>
</dbReference>
<dbReference type="GO" id="GO:0140442">
    <property type="term" value="F:peroxide sensor activity"/>
    <property type="evidence" value="ECO:0000269"/>
    <property type="project" value="PomBase"/>
</dbReference>
<dbReference type="GO" id="GO:0000155">
    <property type="term" value="F:phosphorelay sensor kinase activity"/>
    <property type="evidence" value="ECO:0000314"/>
    <property type="project" value="PomBase"/>
</dbReference>
<dbReference type="GO" id="GO:0000160">
    <property type="term" value="P:phosphorelay signal transduction system"/>
    <property type="evidence" value="ECO:0000314"/>
    <property type="project" value="PomBase"/>
</dbReference>
<dbReference type="GO" id="GO:1900745">
    <property type="term" value="P:positive regulation of p38MAPK cascade"/>
    <property type="evidence" value="ECO:0000315"/>
    <property type="project" value="PomBase"/>
</dbReference>
<dbReference type="CDD" id="cd16922">
    <property type="entry name" value="HATPase_EvgS-ArcB-TorS-like"/>
    <property type="match status" value="1"/>
</dbReference>
<dbReference type="CDD" id="cd00082">
    <property type="entry name" value="HisKA"/>
    <property type="match status" value="1"/>
</dbReference>
<dbReference type="CDD" id="cd00130">
    <property type="entry name" value="PAS"/>
    <property type="match status" value="1"/>
</dbReference>
<dbReference type="CDD" id="cd17546">
    <property type="entry name" value="REC_hyHK_CKI1_RcsC-like"/>
    <property type="match status" value="1"/>
</dbReference>
<dbReference type="FunFam" id="3.40.50.2300:FF:000679">
    <property type="entry name" value="Peroxide stress-activated histidine kinase mak2"/>
    <property type="match status" value="1"/>
</dbReference>
<dbReference type="FunFam" id="3.30.565.10:FF:000010">
    <property type="entry name" value="Sensor histidine kinase RcsC"/>
    <property type="match status" value="1"/>
</dbReference>
<dbReference type="FunFam" id="1.10.510.10:FF:000579">
    <property type="entry name" value="Sensor histidine kinase/response regulator, putative"/>
    <property type="match status" value="1"/>
</dbReference>
<dbReference type="FunFam" id="3.30.450.20:FF:000099">
    <property type="entry name" value="Sensory box sensor histidine kinase"/>
    <property type="match status" value="1"/>
</dbReference>
<dbReference type="FunFam" id="1.10.287.130:FF:000002">
    <property type="entry name" value="Two-component osmosensing histidine kinase"/>
    <property type="match status" value="1"/>
</dbReference>
<dbReference type="Gene3D" id="1.10.287.130">
    <property type="match status" value="1"/>
</dbReference>
<dbReference type="Gene3D" id="3.30.450.40">
    <property type="match status" value="1"/>
</dbReference>
<dbReference type="Gene3D" id="3.40.50.2300">
    <property type="match status" value="1"/>
</dbReference>
<dbReference type="Gene3D" id="3.30.565.10">
    <property type="entry name" value="Histidine kinase-like ATPase, C-terminal domain"/>
    <property type="match status" value="1"/>
</dbReference>
<dbReference type="Gene3D" id="3.30.450.20">
    <property type="entry name" value="PAS domain"/>
    <property type="match status" value="1"/>
</dbReference>
<dbReference type="Gene3D" id="1.10.510.10">
    <property type="entry name" value="Transferase(Phosphotransferase) domain 1"/>
    <property type="match status" value="1"/>
</dbReference>
<dbReference type="InterPro" id="IPR050956">
    <property type="entry name" value="2C_system_His_kinase"/>
</dbReference>
<dbReference type="InterPro" id="IPR041664">
    <property type="entry name" value="AAA_16"/>
</dbReference>
<dbReference type="InterPro" id="IPR011006">
    <property type="entry name" value="CheY-like_superfamily"/>
</dbReference>
<dbReference type="InterPro" id="IPR003018">
    <property type="entry name" value="GAF"/>
</dbReference>
<dbReference type="InterPro" id="IPR029016">
    <property type="entry name" value="GAF-like_dom_sf"/>
</dbReference>
<dbReference type="InterPro" id="IPR036890">
    <property type="entry name" value="HATPase_C_sf"/>
</dbReference>
<dbReference type="InterPro" id="IPR005467">
    <property type="entry name" value="His_kinase_dom"/>
</dbReference>
<dbReference type="InterPro" id="IPR003661">
    <property type="entry name" value="HisK_dim/P_dom"/>
</dbReference>
<dbReference type="InterPro" id="IPR036097">
    <property type="entry name" value="HisK_dim/P_sf"/>
</dbReference>
<dbReference type="InterPro" id="IPR011009">
    <property type="entry name" value="Kinase-like_dom_sf"/>
</dbReference>
<dbReference type="InterPro" id="IPR027417">
    <property type="entry name" value="P-loop_NTPase"/>
</dbReference>
<dbReference type="InterPro" id="IPR000014">
    <property type="entry name" value="PAS"/>
</dbReference>
<dbReference type="InterPro" id="IPR035965">
    <property type="entry name" value="PAS-like_dom_sf"/>
</dbReference>
<dbReference type="InterPro" id="IPR000719">
    <property type="entry name" value="Prot_kinase_dom"/>
</dbReference>
<dbReference type="InterPro" id="IPR004358">
    <property type="entry name" value="Sig_transdc_His_kin-like_C"/>
</dbReference>
<dbReference type="InterPro" id="IPR001789">
    <property type="entry name" value="Sig_transdc_resp-reg_receiver"/>
</dbReference>
<dbReference type="InterPro" id="IPR011990">
    <property type="entry name" value="TPR-like_helical_dom_sf"/>
</dbReference>
<dbReference type="PANTHER" id="PTHR43719:SF28">
    <property type="entry name" value="PEROXIDE STRESS-ACTIVATED HISTIDINE KINASE MAK1-RELATED"/>
    <property type="match status" value="1"/>
</dbReference>
<dbReference type="PANTHER" id="PTHR43719">
    <property type="entry name" value="TWO-COMPONENT HISTIDINE KINASE"/>
    <property type="match status" value="1"/>
</dbReference>
<dbReference type="Pfam" id="PF13191">
    <property type="entry name" value="AAA_16"/>
    <property type="match status" value="1"/>
</dbReference>
<dbReference type="Pfam" id="PF01590">
    <property type="entry name" value="GAF"/>
    <property type="match status" value="1"/>
</dbReference>
<dbReference type="Pfam" id="PF02518">
    <property type="entry name" value="HATPase_c"/>
    <property type="match status" value="1"/>
</dbReference>
<dbReference type="Pfam" id="PF00512">
    <property type="entry name" value="HisKA"/>
    <property type="match status" value="1"/>
</dbReference>
<dbReference type="Pfam" id="PF00069">
    <property type="entry name" value="Pkinase"/>
    <property type="match status" value="1"/>
</dbReference>
<dbReference type="Pfam" id="PF00072">
    <property type="entry name" value="Response_reg"/>
    <property type="match status" value="1"/>
</dbReference>
<dbReference type="PRINTS" id="PR00344">
    <property type="entry name" value="BCTRLSENSOR"/>
</dbReference>
<dbReference type="SMART" id="SM00065">
    <property type="entry name" value="GAF"/>
    <property type="match status" value="1"/>
</dbReference>
<dbReference type="SMART" id="SM00387">
    <property type="entry name" value="HATPase_c"/>
    <property type="match status" value="1"/>
</dbReference>
<dbReference type="SMART" id="SM00388">
    <property type="entry name" value="HisKA"/>
    <property type="match status" value="1"/>
</dbReference>
<dbReference type="SMART" id="SM00091">
    <property type="entry name" value="PAS"/>
    <property type="match status" value="1"/>
</dbReference>
<dbReference type="SMART" id="SM00448">
    <property type="entry name" value="REC"/>
    <property type="match status" value="1"/>
</dbReference>
<dbReference type="SMART" id="SM00220">
    <property type="entry name" value="S_TKc"/>
    <property type="match status" value="1"/>
</dbReference>
<dbReference type="SUPFAM" id="SSF55874">
    <property type="entry name" value="ATPase domain of HSP90 chaperone/DNA topoisomerase II/histidine kinase"/>
    <property type="match status" value="1"/>
</dbReference>
<dbReference type="SUPFAM" id="SSF52172">
    <property type="entry name" value="CheY-like"/>
    <property type="match status" value="1"/>
</dbReference>
<dbReference type="SUPFAM" id="SSF55781">
    <property type="entry name" value="GAF domain-like"/>
    <property type="match status" value="1"/>
</dbReference>
<dbReference type="SUPFAM" id="SSF47384">
    <property type="entry name" value="Homodimeric domain of signal transducing histidine kinase"/>
    <property type="match status" value="1"/>
</dbReference>
<dbReference type="SUPFAM" id="SSF52540">
    <property type="entry name" value="P-loop containing nucleoside triphosphate hydrolases"/>
    <property type="match status" value="1"/>
</dbReference>
<dbReference type="SUPFAM" id="SSF56112">
    <property type="entry name" value="Protein kinase-like (PK-like)"/>
    <property type="match status" value="1"/>
</dbReference>
<dbReference type="SUPFAM" id="SSF55785">
    <property type="entry name" value="PYP-like sensor domain (PAS domain)"/>
    <property type="match status" value="1"/>
</dbReference>
<dbReference type="SUPFAM" id="SSF48452">
    <property type="entry name" value="TPR-like"/>
    <property type="match status" value="1"/>
</dbReference>
<dbReference type="PROSITE" id="PS50109">
    <property type="entry name" value="HIS_KIN"/>
    <property type="match status" value="1"/>
</dbReference>
<dbReference type="PROSITE" id="PS50011">
    <property type="entry name" value="PROTEIN_KINASE_DOM"/>
    <property type="match status" value="1"/>
</dbReference>
<dbReference type="PROSITE" id="PS50110">
    <property type="entry name" value="RESPONSE_REGULATORY"/>
    <property type="match status" value="1"/>
</dbReference>
<accession>O14002</accession>
<feature type="chain" id="PRO_0000081409" description="Peroxide stress-activated histidine kinase mak2">
    <location>
        <begin position="1"/>
        <end position="2310"/>
    </location>
</feature>
<feature type="domain" description="Protein kinase" evidence="2">
    <location>
        <begin position="12"/>
        <end position="292"/>
    </location>
</feature>
<feature type="domain" description="GAF">
    <location>
        <begin position="1450"/>
        <end position="1592"/>
    </location>
</feature>
<feature type="domain" description="Histidine kinase" evidence="1">
    <location>
        <begin position="1760"/>
        <end position="1986"/>
    </location>
</feature>
<feature type="domain" description="Response regulatory" evidence="3">
    <location>
        <begin position="2180"/>
        <end position="2303"/>
    </location>
</feature>
<feature type="modified residue" description="Phosphohistidine; by autocatalysis" evidence="1">
    <location>
        <position position="1763"/>
    </location>
</feature>
<feature type="modified residue" description="4-aspartylphosphate" evidence="3">
    <location>
        <position position="2232"/>
    </location>
</feature>
<sequence>MSLYKSLDVAIDYAISQLGEFQFQPIRTQSNPSSLLSACLVRAVHVETRRKVIFKFSQQTFKLENEYFLLRQLSSHPNGRNYAIAPAYILLLNETLGALIYDDPGPNILDEWLGNPNPLDLKLFLKFALGVSYVLCFLHEKKIVHGEIRLDTFHYDLNAPIHAKLLTIGSSVSPIRFTLSSLNWKRLYQVQNICHKLQFFSPEQIGNVGRPLDSRSDIYSLGILFYVILTKQYPWGGQSMRIVQSIHMRQFPSVLPRRPDAFPALDQLIQKMTAKSMNSRISSATDLCYTIVELMQEFSTITSSPLLDQKLLSINKPQQEKLKFPKLLLTNSSDYVRIFHELVAFSSKRDLLTSAKRVDKLPKQHLFKYRPVDNEATYCQVVTVTGEKGSGKSNLLNAVADEARKFGYFAMSSFKGHHFSPYSAIFKCVSLIMQQTLREEKQLVTDYFTSLWEFLGFQLIYMGELFEYVPELNSLLSPKYNLHCKRENYFKLKKRDPQQFRSASGRLGFMVCLLEILSFTSRVRPVIIILDELHLADHPSLSLIIGMISHRLPILLILAWDEPVMFKDFSKCLHEAPYAMVTDIRMNLFDRKNITEFLDSTLESPTQALGPLVLLMQKLSKGNPLVLKSLLLIAFANNGFAFHPKSSSWTYDLPVINRSFEALSSYDIPPLLASLLDALLPARCIEFLLWAALLVEPFPFELLRLITTSMHLFIPKEEILDFPLNVLQFDNDNESCQFSETFFREGILSKISLRRAESMHAQIAKELITGTAKEFYDIRTVHHILKGLGVIKKFDNTKPYILALKESADALMQFGSYEYATELLKSCLFLLPRNFWNSKLYTRKDLISIHISLAMCYWWSKDHENAIKVLKNPKLSSSNVYDYLPAFRLLTKIEYYKYQSLRSIDKAQELLSNLGLKLKEPTDDVLREFYDRLSTKFLECDFLVKQSEPLDRKRIDAISVILSECGFVLFNFSQPYYYYFSFLLAEMYLRYGNPSLRYSVMFLASYCFVTRRKPEFLLRISQVDSDLFVIKDRSAVAHAELIYWGLKRELCSTETGSAVTLESILLQCVMFGDKIYGAYCLACLMAQRVFRGDHIHQLLLDQENSETLLLLWDCEPPFTYYLMLIRNSLLALFGLTNNDDPNNILTTKQRTQKDLHDKLTSKKVPCTFCCWYYAGIIFLNTLFHHYEYVMSIAQEVRKLVDGKLYERYYLITRSFIGVAALQLLFYKKNISEFEREKVEDVAHWAQSSLSEMAKCFHAELYKLWVCLLEGLRQRNLGNYMEALRLFEKVTSMGASVFSPIEFPFVLELIGEFYYGRGHKFLAKSYITRALSCLKNIGCYGVENKLRSRYSDLISDVESRGTTVVSIATTTGDYAEKLKLLRNQDINDFSLGLASYSDIFDKPLVTLPVKKSSAVDESENDFYDRNDEESFDIVSLVSVIKCGQLLSSKLRLGPLLTTVIKLVIEYSQAKHAAIILKDASNYTLAAHGNVEKAESFEPPVILSQSDVKIPDSLLSEVFDHCRIVSLYTVSASQDAELLRWLQEEHDMDFFAIIPLQFKESVIGALYLCLSRRAIRTGNVTFLKLLSQQIAISVSNALLFQSLRRTITDNVTLIELQRLSYQRYKAIEEKCITLLDSLPCIVWTLDSDIGEIEYTNASKRNYFGVPEDCHDSLSWKTFIHPDHHHQFQEKLLNLKTLELGDIELLLRMEDGNYHWHLCRGLSFKEDANAKKWIVVCIDINDEKEAREAAMHAVNLKTNFLANMSHELRTPFSSFYGMLSLLSDTKLNEEQYDIVSTAKQSCTSLVQIIDDLLNFSELKSGKMKLEPDKVFDVEENIADCIELVYPSLSSKPVQISYDIYPNVPALLAGDSAKLRQVITNLLGNSVKFTTEGHILLRCMAIDEEINAEENQCKLRFEIEDTGIGLKEEQLKLLFNPFTQVDGSTTRIYGGSGLGLSICLQICKIMDGDIGVQSVYGEGSTFWFHVQLRNVTSKLSQKHFEESHERFANIRQSLKNAKILVVKSFTTSRSIFRSLFSLAVVDTTTIYSDIEQQLIDSLDKRQPYDFLCIEAASGQTEQIITQILSNQKLNKVLLIVLLPSIQRTKVRSDGDPFITSLNKNQSRIFCFREPIRISKLLQNFPALLSKWSTPTKLVEPSQFRASPRKVDQAVVLSSEEKEILQKKYALIAEDNLIARKLLTKQLSNLGFQVHAAVDGVELVKMYEAKQFGFYSVIFADYHMPIRDGAEAVMDIRAYERENNCSTPIPVIALTADIQKSAKQRCLEVGMNFYLTKPFTQKQLVNAVREFVLLEKSAR</sequence>
<name>MAK2_SCHPO</name>
<gene>
    <name type="primary">mak2</name>
    <name type="synonym">phk1</name>
    <name type="ORF">SPAC27E2.09</name>
</gene>
<protein>
    <recommendedName>
        <fullName>Peroxide stress-activated histidine kinase mak2</fullName>
        <ecNumber>2.7.13.3</ecNumber>
    </recommendedName>
    <alternativeName>
        <fullName>His-Asp phosphorelay kinase phk1</fullName>
    </alternativeName>
    <alternativeName>
        <fullName>Mcs4-associated kinase 2</fullName>
    </alternativeName>
</protein>
<comment type="function">
    <text evidence="4 5">Involved in the control of the SAPK-dependent transcriptional response to peroxide stress. Regulates sty1 activity.</text>
</comment>
<comment type="catalytic activity">
    <reaction>
        <text>ATP + protein L-histidine = ADP + protein N-phospho-L-histidine.</text>
        <dbReference type="EC" id="2.7.13.3"/>
    </reaction>
</comment>
<comment type="subcellular location">
    <subcellularLocation>
        <location evidence="6">Cytoplasm</location>
    </subcellularLocation>
</comment>
<keyword id="KW-0067">ATP-binding</keyword>
<keyword id="KW-0963">Cytoplasm</keyword>
<keyword id="KW-0418">Kinase</keyword>
<keyword id="KW-0547">Nucleotide-binding</keyword>
<keyword id="KW-0597">Phosphoprotein</keyword>
<keyword id="KW-1185">Reference proteome</keyword>
<keyword id="KW-0808">Transferase</keyword>
<keyword id="KW-0902">Two-component regulatory system</keyword>
<evidence type="ECO:0000255" key="1">
    <source>
        <dbReference type="PROSITE-ProRule" id="PRU00107"/>
    </source>
</evidence>
<evidence type="ECO:0000255" key="2">
    <source>
        <dbReference type="PROSITE-ProRule" id="PRU00159"/>
    </source>
</evidence>
<evidence type="ECO:0000255" key="3">
    <source>
        <dbReference type="PROSITE-ProRule" id="PRU00169"/>
    </source>
</evidence>
<evidence type="ECO:0000269" key="4">
    <source>
    </source>
</evidence>
<evidence type="ECO:0000269" key="5">
    <source>
    </source>
</evidence>
<evidence type="ECO:0000305" key="6">
    <source>
    </source>
</evidence>
<reference key="1">
    <citation type="journal article" date="2002" name="Nature">
        <title>The genome sequence of Schizosaccharomyces pombe.</title>
        <authorList>
            <person name="Wood V."/>
            <person name="Gwilliam R."/>
            <person name="Rajandream M.A."/>
            <person name="Lyne M.H."/>
            <person name="Lyne R."/>
            <person name="Stewart A."/>
            <person name="Sgouros J.G."/>
            <person name="Peat N."/>
            <person name="Hayles J."/>
            <person name="Baker S.G."/>
            <person name="Basham D."/>
            <person name="Bowman S."/>
            <person name="Brooks K."/>
            <person name="Brown D."/>
            <person name="Brown S."/>
            <person name="Chillingworth T."/>
            <person name="Churcher C.M."/>
            <person name="Collins M."/>
            <person name="Connor R."/>
            <person name="Cronin A."/>
            <person name="Davis P."/>
            <person name="Feltwell T."/>
            <person name="Fraser A."/>
            <person name="Gentles S."/>
            <person name="Goble A."/>
            <person name="Hamlin N."/>
            <person name="Harris D.E."/>
            <person name="Hidalgo J."/>
            <person name="Hodgson G."/>
            <person name="Holroyd S."/>
            <person name="Hornsby T."/>
            <person name="Howarth S."/>
            <person name="Huckle E.J."/>
            <person name="Hunt S."/>
            <person name="Jagels K."/>
            <person name="James K.D."/>
            <person name="Jones L."/>
            <person name="Jones M."/>
            <person name="Leather S."/>
            <person name="McDonald S."/>
            <person name="McLean J."/>
            <person name="Mooney P."/>
            <person name="Moule S."/>
            <person name="Mungall K.L."/>
            <person name="Murphy L.D."/>
            <person name="Niblett D."/>
            <person name="Odell C."/>
            <person name="Oliver K."/>
            <person name="O'Neil S."/>
            <person name="Pearson D."/>
            <person name="Quail M.A."/>
            <person name="Rabbinowitsch E."/>
            <person name="Rutherford K.M."/>
            <person name="Rutter S."/>
            <person name="Saunders D."/>
            <person name="Seeger K."/>
            <person name="Sharp S."/>
            <person name="Skelton J."/>
            <person name="Simmonds M.N."/>
            <person name="Squares R."/>
            <person name="Squares S."/>
            <person name="Stevens K."/>
            <person name="Taylor K."/>
            <person name="Taylor R.G."/>
            <person name="Tivey A."/>
            <person name="Walsh S.V."/>
            <person name="Warren T."/>
            <person name="Whitehead S."/>
            <person name="Woodward J.R."/>
            <person name="Volckaert G."/>
            <person name="Aert R."/>
            <person name="Robben J."/>
            <person name="Grymonprez B."/>
            <person name="Weltjens I."/>
            <person name="Vanstreels E."/>
            <person name="Rieger M."/>
            <person name="Schaefer M."/>
            <person name="Mueller-Auer S."/>
            <person name="Gabel C."/>
            <person name="Fuchs M."/>
            <person name="Duesterhoeft A."/>
            <person name="Fritzc C."/>
            <person name="Holzer E."/>
            <person name="Moestl D."/>
            <person name="Hilbert H."/>
            <person name="Borzym K."/>
            <person name="Langer I."/>
            <person name="Beck A."/>
            <person name="Lehrach H."/>
            <person name="Reinhardt R."/>
            <person name="Pohl T.M."/>
            <person name="Eger P."/>
            <person name="Zimmermann W."/>
            <person name="Wedler H."/>
            <person name="Wambutt R."/>
            <person name="Purnelle B."/>
            <person name="Goffeau A."/>
            <person name="Cadieu E."/>
            <person name="Dreano S."/>
            <person name="Gloux S."/>
            <person name="Lelaure V."/>
            <person name="Mottier S."/>
            <person name="Galibert F."/>
            <person name="Aves S.J."/>
            <person name="Xiang Z."/>
            <person name="Hunt C."/>
            <person name="Moore K."/>
            <person name="Hurst S.M."/>
            <person name="Lucas M."/>
            <person name="Rochet M."/>
            <person name="Gaillardin C."/>
            <person name="Tallada V.A."/>
            <person name="Garzon A."/>
            <person name="Thode G."/>
            <person name="Daga R.R."/>
            <person name="Cruzado L."/>
            <person name="Jimenez J."/>
            <person name="Sanchez M."/>
            <person name="del Rey F."/>
            <person name="Benito J."/>
            <person name="Dominguez A."/>
            <person name="Revuelta J.L."/>
            <person name="Moreno S."/>
            <person name="Armstrong J."/>
            <person name="Forsburg S.L."/>
            <person name="Cerutti L."/>
            <person name="Lowe T."/>
            <person name="McCombie W.R."/>
            <person name="Paulsen I."/>
            <person name="Potashkin J."/>
            <person name="Shpakovski G.V."/>
            <person name="Ussery D."/>
            <person name="Barrell B.G."/>
            <person name="Nurse P."/>
        </authorList>
    </citation>
    <scope>NUCLEOTIDE SEQUENCE [LARGE SCALE GENOMIC DNA]</scope>
    <source>
        <strain>972 / ATCC 24843</strain>
    </source>
</reference>
<reference key="2">
    <citation type="journal article" date="2001" name="Mol. Biol. Cell">
        <title>Peroxide sensors for the fission yeast stress-activated mitogen-activated protein kinase pathway.</title>
        <authorList>
            <person name="Buck V."/>
            <person name="Quinn J."/>
            <person name="Soto Pino T."/>
            <person name="Martin H."/>
            <person name="Saldanha J."/>
            <person name="Makino K."/>
            <person name="Morgan B.A."/>
            <person name="Millar J.B.A."/>
        </authorList>
    </citation>
    <scope>FUNCTION</scope>
    <scope>SUBCELLULAR LOCATION</scope>
</reference>
<reference key="3">
    <citation type="journal article" date="2001" name="Biosci. Biotechnol. Biochem.">
        <title>Genetic analysis of the His-to-Asp phosphorelay implicated in mitotic cell cycle control: involvement of histidine-kinase genes of Schizosaccharomyces pombe.</title>
        <authorList>
            <person name="Aoyama K."/>
            <person name="Aiba H."/>
            <person name="Mizuno T."/>
        </authorList>
    </citation>
    <scope>FUNCTION</scope>
</reference>
<proteinExistence type="inferred from homology"/>
<organism>
    <name type="scientific">Schizosaccharomyces pombe (strain 972 / ATCC 24843)</name>
    <name type="common">Fission yeast</name>
    <dbReference type="NCBI Taxonomy" id="284812"/>
    <lineage>
        <taxon>Eukaryota</taxon>
        <taxon>Fungi</taxon>
        <taxon>Dikarya</taxon>
        <taxon>Ascomycota</taxon>
        <taxon>Taphrinomycotina</taxon>
        <taxon>Schizosaccharomycetes</taxon>
        <taxon>Schizosaccharomycetales</taxon>
        <taxon>Schizosaccharomycetaceae</taxon>
        <taxon>Schizosaccharomyces</taxon>
    </lineage>
</organism>